<reference key="1">
    <citation type="journal article" date="1992" name="Genes Dev.">
        <title>Isolation and characterization of RAT1: an essential gene of Saccharomyces cerevisiae required for the efficient nucleocytoplasmic trafficking of mRNA.</title>
        <authorList>
            <person name="Amberg D.C."/>
            <person name="Goldstein A.L."/>
            <person name="Cole C.N."/>
        </authorList>
    </citation>
    <scope>NUCLEOTIDE SEQUENCE [GENOMIC DNA]</scope>
</reference>
<reference key="2">
    <citation type="journal article" date="1993" name="Mol. Cell. Biol.">
        <title>An essential yeast gene with homology to the exonuclease-encoding XRN1/KEM1 gene also encodes a protein with exoribonuclease activity.</title>
        <authorList>
            <person name="Kenna M."/>
            <person name="Stevens A."/>
            <person name="McCammon M."/>
            <person name="Douglas M.G."/>
        </authorList>
    </citation>
    <scope>NUCLEOTIDE SEQUENCE [GENOMIC DNA]</scope>
    <scope>FUNCTION</scope>
    <scope>COFACTOR</scope>
    <scope>SUBCELLULAR LOCATION</scope>
</reference>
<reference key="3">
    <citation type="journal article" date="1993" name="Mol. Cell. Biol.">
        <title>Structure of the yeast TAP1 protein: dependence of transcription activation on the DNA context of the target gene.</title>
        <authorList>
            <person name="Aldrich T.L."/>
            <person name="di Segni G."/>
            <person name="McConaughy B.L."/>
            <person name="Keen N.J."/>
            <person name="Whelen S."/>
            <person name="Hall B.D."/>
        </authorList>
    </citation>
    <scope>NUCLEOTIDE SEQUENCE [GENOMIC DNA]</scope>
</reference>
<reference key="4">
    <citation type="journal article" date="1997" name="Nature">
        <title>The nucleotide sequence of Saccharomyces cerevisiae chromosome XV.</title>
        <authorList>
            <person name="Dujon B."/>
            <person name="Albermann K."/>
            <person name="Aldea M."/>
            <person name="Alexandraki D."/>
            <person name="Ansorge W."/>
            <person name="Arino J."/>
            <person name="Benes V."/>
            <person name="Bohn C."/>
            <person name="Bolotin-Fukuhara M."/>
            <person name="Bordonne R."/>
            <person name="Boyer J."/>
            <person name="Camasses A."/>
            <person name="Casamayor A."/>
            <person name="Casas C."/>
            <person name="Cheret G."/>
            <person name="Cziepluch C."/>
            <person name="Daignan-Fornier B."/>
            <person name="Dang V.-D."/>
            <person name="de Haan M."/>
            <person name="Delius H."/>
            <person name="Durand P."/>
            <person name="Fairhead C."/>
            <person name="Feldmann H."/>
            <person name="Gaillon L."/>
            <person name="Galisson F."/>
            <person name="Gamo F.-J."/>
            <person name="Gancedo C."/>
            <person name="Goffeau A."/>
            <person name="Goulding S.E."/>
            <person name="Grivell L.A."/>
            <person name="Habbig B."/>
            <person name="Hand N.J."/>
            <person name="Hani J."/>
            <person name="Hattenhorst U."/>
            <person name="Hebling U."/>
            <person name="Hernando Y."/>
            <person name="Herrero E."/>
            <person name="Heumann K."/>
            <person name="Hiesel R."/>
            <person name="Hilger F."/>
            <person name="Hofmann B."/>
            <person name="Hollenberg C.P."/>
            <person name="Hughes B."/>
            <person name="Jauniaux J.-C."/>
            <person name="Kalogeropoulos A."/>
            <person name="Katsoulou C."/>
            <person name="Kordes E."/>
            <person name="Lafuente M.J."/>
            <person name="Landt O."/>
            <person name="Louis E.J."/>
            <person name="Maarse A.C."/>
            <person name="Madania A."/>
            <person name="Mannhaupt G."/>
            <person name="Marck C."/>
            <person name="Martin R.P."/>
            <person name="Mewes H.-W."/>
            <person name="Michaux G."/>
            <person name="Paces V."/>
            <person name="Parle-McDermott A.G."/>
            <person name="Pearson B.M."/>
            <person name="Perrin A."/>
            <person name="Pettersson B."/>
            <person name="Poch O."/>
            <person name="Pohl T.M."/>
            <person name="Poirey R."/>
            <person name="Portetelle D."/>
            <person name="Pujol A."/>
            <person name="Purnelle B."/>
            <person name="Ramezani Rad M."/>
            <person name="Rechmann S."/>
            <person name="Schwager C."/>
            <person name="Schweizer M."/>
            <person name="Sor F."/>
            <person name="Sterky F."/>
            <person name="Tarassov I.A."/>
            <person name="Teodoru C."/>
            <person name="Tettelin H."/>
            <person name="Thierry A."/>
            <person name="Tobiasch E."/>
            <person name="Tzermia M."/>
            <person name="Uhlen M."/>
            <person name="Unseld M."/>
            <person name="Valens M."/>
            <person name="Vandenbol M."/>
            <person name="Vetter I."/>
            <person name="Vlcek C."/>
            <person name="Voet M."/>
            <person name="Volckaert G."/>
            <person name="Voss H."/>
            <person name="Wambutt R."/>
            <person name="Wedler H."/>
            <person name="Wiemann S."/>
            <person name="Winsor B."/>
            <person name="Wolfe K.H."/>
            <person name="Zollner A."/>
            <person name="Zumstein E."/>
            <person name="Kleine K."/>
        </authorList>
    </citation>
    <scope>NUCLEOTIDE SEQUENCE [LARGE SCALE GENOMIC DNA]</scope>
    <source>
        <strain>ATCC 204508 / S288c</strain>
    </source>
</reference>
<reference key="5">
    <citation type="journal article" date="2014" name="G3 (Bethesda)">
        <title>The reference genome sequence of Saccharomyces cerevisiae: Then and now.</title>
        <authorList>
            <person name="Engel S.R."/>
            <person name="Dietrich F.S."/>
            <person name="Fisk D.G."/>
            <person name="Binkley G."/>
            <person name="Balakrishnan R."/>
            <person name="Costanzo M.C."/>
            <person name="Dwight S.S."/>
            <person name="Hitz B.C."/>
            <person name="Karra K."/>
            <person name="Nash R.S."/>
            <person name="Weng S."/>
            <person name="Wong E.D."/>
            <person name="Lloyd P."/>
            <person name="Skrzypek M.S."/>
            <person name="Miyasato S.R."/>
            <person name="Simison M."/>
            <person name="Cherry J.M."/>
        </authorList>
    </citation>
    <scope>GENOME REANNOTATION</scope>
    <source>
        <strain>ATCC 204508 / S288c</strain>
    </source>
</reference>
<reference key="6">
    <citation type="journal article" date="1993" name="Mol. Cell. Biol.">
        <title>Isolation of STD1, a high-copy-number suppressor of a dominant negative mutation in the yeast TATA-binding protein.</title>
        <authorList>
            <person name="Ganster R.W."/>
            <person name="Shen W."/>
            <person name="Schmidt M.C."/>
        </authorList>
    </citation>
    <scope>NUCLEOTIDE SEQUENCE [GENOMIC DNA] OF 929-1006</scope>
    <source>
        <strain>BJ1991</strain>
    </source>
</reference>
<reference key="7">
    <citation type="journal article" date="1995" name="J. Biol. Chem.">
        <title>5'-exonuclease-2 of Saccharomyces cerevisiae. Purification and features of ribonuclease activity with comparison to 5'-exonuclease-1.</title>
        <authorList>
            <person name="Stevens A."/>
            <person name="Poole T.L."/>
        </authorList>
    </citation>
    <scope>PROTEIN SEQUENCE OF 2-9</scope>
    <scope>FUNCTION</scope>
    <scope>COFACTOR</scope>
    <scope>BIOPHYSICOCHEMICAL PROPERTIES</scope>
</reference>
<reference key="8">
    <citation type="journal article" date="1997" name="Biochem. Biophys. Res. Commun.">
        <title>Structural modifications of RNA influence the 5' exoribonucleolytic hydrolysis by XRN1 and HKE1 of Saccharomyces cerevisiae.</title>
        <authorList>
            <person name="Poole T.L."/>
            <person name="Stevens A."/>
        </authorList>
    </citation>
    <scope>FUNCTION</scope>
</reference>
<reference key="9">
    <citation type="journal article" date="1997" name="EMBO J.">
        <title>Lithium toxicity in yeast is due to the inhibition of RNA processing enzymes.</title>
        <authorList>
            <person name="Dichtl B."/>
            <person name="Stevens A."/>
            <person name="Tollervey D."/>
        </authorList>
    </citation>
    <scope>FUNCTION</scope>
    <scope>ACTIVITY REGULATION</scope>
</reference>
<reference key="10">
    <citation type="journal article" date="1997" name="Mol. Cell. Biol.">
        <title>Rat1p and Xrn1p are functionally interchangeable exoribonucleases that are restricted to and required in the nucleus and cytoplasm, respectively.</title>
        <authorList>
            <person name="Johnson A.W."/>
        </authorList>
    </citation>
    <scope>SUBCELLULAR LOCATION</scope>
    <scope>MUTAGENESIS OF HIS-518; LEU-520; LYS-534; LYS-535 AND LYS-537</scope>
</reference>
<reference key="11">
    <citation type="journal article" date="1998" name="Mol. Cell. Biol.">
        <title>Processing of the precursors to small nucleolar RNAs and rRNAs requires common components.</title>
        <authorList>
            <person name="Petfalski E."/>
            <person name="Dandekar T."/>
            <person name="Henry Y."/>
            <person name="Tollervey D."/>
        </authorList>
    </citation>
    <scope>FUNCTION</scope>
</reference>
<reference key="12">
    <citation type="journal article" date="1998" name="Mol. Cell. Biol.">
        <title>Processing of the intron-encoded U18 small nucleolar RNA in the yeast Saccharomyces cerevisiae relies on both exo- and endonucleolytic activities.</title>
        <authorList>
            <person name="Villa T."/>
            <person name="Ceradini F."/>
            <person name="Presutti C."/>
            <person name="Bozzoni I."/>
        </authorList>
    </citation>
    <scope>FUNCTION</scope>
</reference>
<reference key="13">
    <citation type="journal article" date="1999" name="Mol. Cell. Biol.">
        <title>Seven novel methylation guide small nucleolar RNAs are processed from a common polycistronic transcript by Rat1p and RNase III in yeast.</title>
        <authorList>
            <person name="Qu L.-H."/>
            <person name="Henras A."/>
            <person name="Lu Y.-J."/>
            <person name="Zhou H."/>
            <person name="Zhou W.-X."/>
            <person name="Zhu Y.-Q."/>
            <person name="Zhao J."/>
            <person name="Henry Y."/>
            <person name="Caizergues-Ferrer M."/>
            <person name="Bachellerie J.-P."/>
        </authorList>
    </citation>
    <scope>FUNCTION</scope>
</reference>
<reference key="14">
    <citation type="journal article" date="2000" name="Cell">
        <title>Identification of a regulated pathway for nuclear pre-mRNA turnover.</title>
        <authorList>
            <person name="Bousquet-Antonelli C."/>
            <person name="Presutti C."/>
            <person name="Tollervey D."/>
        </authorList>
    </citation>
    <scope>FUNCTION</scope>
</reference>
<reference key="15">
    <citation type="journal article" date="2000" name="Mol. Cell. Biol.">
        <title>Saccharomyces cerevisiae RAI1 (YGL246c) is homologous to human DOM3Z and encodes a protein that binds the nuclear exoribonuclease Rat1p.</title>
        <authorList>
            <person name="Xue Y."/>
            <person name="Bai X."/>
            <person name="Lee I."/>
            <person name="Kallstrom G."/>
            <person name="Ho J."/>
            <person name="Brown J."/>
            <person name="Stevens A."/>
            <person name="Johnson A.W."/>
        </authorList>
    </citation>
    <scope>FUNCTION</scope>
    <scope>INTERACTION WITH RAI1</scope>
</reference>
<reference key="16">
    <citation type="journal article" date="2000" name="RNA">
        <title>The final step in the formation of 25S rRNA in Saccharomyces cerevisiae is performed by 5'-&gt;3' exonucleases.</title>
        <authorList>
            <person name="Geerlings T.H."/>
            <person name="Vos J.C."/>
            <person name="Raue H.A."/>
        </authorList>
    </citation>
    <scope>FUNCTION</scope>
</reference>
<reference key="17">
    <citation type="journal article" date="2001" name="Mol. Cell. Biol.">
        <title>Upf1p, Nmd2p, and Upf3p regulate the decapping and exonucleolytic degradation of both nonsense-containing mRNAs and wild-type mRNAs.</title>
        <authorList>
            <person name="He F."/>
            <person name="Jacobson A."/>
        </authorList>
    </citation>
    <scope>FUNCTION</scope>
</reference>
<reference key="18">
    <citation type="journal article" date="2003" name="Mol. Cell">
        <title>RNase III-mediated degradation of unspliced pre-mRNAs and lariat introns.</title>
        <authorList>
            <person name="Danin-Kreiselman M."/>
            <person name="Lee C.Y."/>
            <person name="Chanfreau G."/>
        </authorList>
    </citation>
    <scope>FUNCTION</scope>
</reference>
<reference key="19">
    <citation type="journal article" date="2003" name="Mol. Cell. Biol.">
        <title>Intersection of the Kap123p-mediated nuclear import and ribosome export pathways.</title>
        <authorList>
            <person name="Sydorskyy Y."/>
            <person name="Dilworth D.J."/>
            <person name="Yi E.C."/>
            <person name="Goodlett D.R."/>
            <person name="Wozniak R.W."/>
            <person name="Aitchison J.D."/>
        </authorList>
    </citation>
    <scope>IDENTIFICATION BY MASS SPECTROMETRY</scope>
    <scope>INTERACTION WITH RAI1</scope>
    <scope>SUBCELLULAR LOCATION</scope>
</reference>
<reference key="20">
    <citation type="journal article" date="2003" name="Nature">
        <title>Global analysis of protein expression in yeast.</title>
        <authorList>
            <person name="Ghaemmaghami S."/>
            <person name="Huh W.-K."/>
            <person name="Bower K."/>
            <person name="Howson R.W."/>
            <person name="Belle A."/>
            <person name="Dephoure N."/>
            <person name="O'Shea E.K."/>
            <person name="Weissman J.S."/>
        </authorList>
    </citation>
    <scope>LEVEL OF PROTEIN EXPRESSION [LARGE SCALE ANALYSIS]</scope>
</reference>
<reference key="21">
    <citation type="journal article" date="2003" name="RNA">
        <title>The roles of endonucleolytic cleavage and exonucleolytic digestion in the 5'-end processing of S. cerevisiae box C/D snoRNAs.</title>
        <authorList>
            <person name="Lee C.Y."/>
            <person name="Lee A."/>
            <person name="Chanfreau G."/>
        </authorList>
    </citation>
    <scope>FUNCTION</scope>
</reference>
<reference key="22">
    <citation type="journal article" date="2004" name="Nature">
        <title>The yeast Rat1 exonuclease promotes transcription termination by RNA polymerase II.</title>
        <authorList>
            <person name="Kim M."/>
            <person name="Krogan N.J."/>
            <person name="Vasiljeva L."/>
            <person name="Rando O.J."/>
            <person name="Nedea E."/>
            <person name="Greenblatt J.F."/>
            <person name="Buratowski S."/>
        </authorList>
    </citation>
    <scope>FUNCTION</scope>
    <scope>IDENTIFICATION BY MASS SPECTROMETRY</scope>
    <scope>IDENTIFICATION IN A COMPLEX WITH RTT103</scope>
    <scope>MUTAGENESIS OF ASP-235</scope>
</reference>
<reference key="23">
    <citation type="journal article" date="2005" name="Nature">
        <authorList>
            <person name="Kim M."/>
            <person name="Krogan N.J."/>
            <person name="Vasiljeva L."/>
            <person name="Rando O.J."/>
            <person name="Nedea E."/>
            <person name="Greenblatt J.F."/>
            <person name="Buratowski S."/>
        </authorList>
    </citation>
    <scope>ERRATUM OF PUBMED:15565157</scope>
</reference>
<reference key="24">
    <citation type="journal article" date="2005" name="RNA">
        <title>Rat1p and Rai1p function with the nuclear exosome in the processing and degradation of rRNA precursors.</title>
        <authorList>
            <person name="Fang F."/>
            <person name="Phillips S."/>
            <person name="Butler J.S."/>
        </authorList>
    </citation>
    <scope>FUNCTION</scope>
</reference>
<reference key="25">
    <citation type="journal article" date="2006" name="Genes Dev.">
        <title>The role of Rat1 in coupling mRNA 3'-end processing to transcription termination: implications for a unified allosteric-torpedo model.</title>
        <authorList>
            <person name="Luo W."/>
            <person name="Johnson A.W."/>
            <person name="Bentley D.L."/>
        </authorList>
    </citation>
    <scope>FUNCTION</scope>
</reference>
<reference key="26">
    <citation type="journal article" date="2009" name="Science">
        <title>Global analysis of Cdk1 substrate phosphorylation sites provides insights into evolution.</title>
        <authorList>
            <person name="Holt L.J."/>
            <person name="Tuch B.B."/>
            <person name="Villen J."/>
            <person name="Johnson A.D."/>
            <person name="Gygi S.P."/>
            <person name="Morgan D.O."/>
        </authorList>
    </citation>
    <scope>PHOSPHORYLATION [LARGE SCALE ANALYSIS] AT SER-574</scope>
    <scope>IDENTIFICATION BY MASS SPECTROMETRY [LARGE SCALE ANALYSIS]</scope>
</reference>
<feature type="initiator methionine" description="Removed" evidence="14">
    <location>
        <position position="1"/>
    </location>
</feature>
<feature type="chain" id="PRO_0000071399" description="5'-3' exoribonuclease 2">
    <location>
        <begin position="2"/>
        <end position="1006"/>
    </location>
</feature>
<feature type="repeat" description="1-1">
    <location>
        <begin position="955"/>
        <end position="958"/>
    </location>
</feature>
<feature type="repeat" description="2-1">
    <location>
        <begin position="961"/>
        <end position="964"/>
    </location>
</feature>
<feature type="repeat" description="2-2">
    <location>
        <begin position="972"/>
        <end position="974"/>
    </location>
</feature>
<feature type="repeat" description="3-1">
    <location>
        <begin position="975"/>
        <end position="978"/>
    </location>
</feature>
<feature type="repeat" description="3-2">
    <location>
        <begin position="984"/>
        <end position="986"/>
    </location>
</feature>
<feature type="repeat" description="1-2">
    <location>
        <begin position="996"/>
        <end position="999"/>
    </location>
</feature>
<feature type="region of interest" description="Required for retention in the nucleus">
    <location>
        <begin position="492"/>
        <end position="529"/>
    </location>
</feature>
<feature type="region of interest" description="Disordered" evidence="2">
    <location>
        <begin position="561"/>
        <end position="584"/>
    </location>
</feature>
<feature type="region of interest" description="Disordered" evidence="2">
    <location>
        <begin position="939"/>
        <end position="1006"/>
    </location>
</feature>
<feature type="region of interest" description="2 X 4 AA repeats of S-R-Y-D, N-N-N-Y, Y-S-G-N">
    <location>
        <begin position="955"/>
        <end position="999"/>
    </location>
</feature>
<feature type="coiled-coil region" evidence="1">
    <location>
        <begin position="256"/>
        <end position="287"/>
    </location>
</feature>
<feature type="coiled-coil region" evidence="1">
    <location>
        <begin position="453"/>
        <end position="544"/>
    </location>
</feature>
<feature type="compositionally biased region" description="Basic and acidic residues" evidence="2">
    <location>
        <begin position="561"/>
        <end position="575"/>
    </location>
</feature>
<feature type="compositionally biased region" description="Polar residues" evidence="2">
    <location>
        <begin position="939"/>
        <end position="956"/>
    </location>
</feature>
<feature type="compositionally biased region" description="Low complexity" evidence="2">
    <location>
        <begin position="959"/>
        <end position="993"/>
    </location>
</feature>
<feature type="compositionally biased region" description="Basic and acidic residues" evidence="2">
    <location>
        <begin position="996"/>
        <end position="1006"/>
    </location>
</feature>
<feature type="modified residue" description="Phosphoserine" evidence="23">
    <location>
        <position position="574"/>
    </location>
</feature>
<feature type="mutagenesis site" description="Abrogates exonuclease activity and impairs termination of transcription by RNA polymerase II." evidence="11">
    <original>D</original>
    <variation>A</variation>
    <location>
        <position position="235"/>
    </location>
</feature>
<feature type="mutagenesis site" description="Causes mislocalization to the cytoplasm and suppresses the requirement for XRN1 function." evidence="17">
    <original>H</original>
    <variation>Y</variation>
    <location>
        <position position="518"/>
    </location>
</feature>
<feature type="mutagenesis site" description="Suppresses the requirement for XRN1 function." evidence="17">
    <original>L</original>
    <variation>P</variation>
    <location>
        <position position="520"/>
    </location>
</feature>
<feature type="mutagenesis site" description="Causes mislocalization to the cytoplasm; when associated with A-535 and A-537." evidence="17">
    <original>K</original>
    <variation>A</variation>
    <location>
        <position position="534"/>
    </location>
</feature>
<feature type="mutagenesis site" description="Causes mislocalization to the cytoplasm; when associated with A-534 and A-537." evidence="17">
    <original>K</original>
    <variation>A</variation>
    <location>
        <position position="535"/>
    </location>
</feature>
<feature type="mutagenesis site" description="Causes mislocalization to the cytoplasm and suppresses the requirement for XRN1 function." evidence="17">
    <original>K</original>
    <variation>N</variation>
    <location>
        <position position="535"/>
    </location>
</feature>
<feature type="mutagenesis site" description="Causes mislocalization to the cytoplasm; when associated with A-534 and A-535." evidence="17">
    <original>K</original>
    <variation>A</variation>
    <location>
        <position position="537"/>
    </location>
</feature>
<feature type="mutagenesis site" description="Causes mislocalization to the cytoplasm and suppresses the requirement for XRN1 function." evidence="17">
    <original>K</original>
    <variation>E</variation>
    <location>
        <position position="537"/>
    </location>
</feature>
<feature type="mutagenesis site" description="In allele TAP1-1; activates transcription of the promoter-defective yeast SUP4 tRNA(Tyr) allele SUP4A53T61.">
    <original>Y</original>
    <variation>H</variation>
    <location>
        <position position="683"/>
    </location>
</feature>
<feature type="helix" evidence="24">
    <location>
        <begin position="5"/>
        <end position="13"/>
    </location>
</feature>
<feature type="helix" evidence="25">
    <location>
        <begin position="15"/>
        <end position="17"/>
    </location>
</feature>
<feature type="strand" evidence="24">
    <location>
        <begin position="18"/>
        <end position="20"/>
    </location>
</feature>
<feature type="strand" evidence="25">
    <location>
        <begin position="38"/>
        <end position="40"/>
    </location>
</feature>
<feature type="strand" evidence="24">
    <location>
        <begin position="49"/>
        <end position="54"/>
    </location>
</feature>
<feature type="helix" evidence="24">
    <location>
        <begin position="55"/>
        <end position="61"/>
    </location>
</feature>
<feature type="strand" evidence="24">
    <location>
        <begin position="65"/>
        <end position="67"/>
    </location>
</feature>
<feature type="strand" evidence="24">
    <location>
        <begin position="71"/>
        <end position="73"/>
    </location>
</feature>
<feature type="helix" evidence="24">
    <location>
        <begin position="74"/>
        <end position="91"/>
    </location>
</feature>
<feature type="strand" evidence="24">
    <location>
        <begin position="94"/>
        <end position="100"/>
    </location>
</feature>
<feature type="helix" evidence="24">
    <location>
        <begin position="107"/>
        <end position="136"/>
    </location>
</feature>
<feature type="helix" evidence="25">
    <location>
        <begin position="147"/>
        <end position="151"/>
    </location>
</feature>
<feature type="helix" evidence="24">
    <location>
        <begin position="157"/>
        <end position="159"/>
    </location>
</feature>
<feature type="helix" evidence="24">
    <location>
        <begin position="165"/>
        <end position="184"/>
    </location>
</feature>
<feature type="helix" evidence="24">
    <location>
        <begin position="186"/>
        <end position="188"/>
    </location>
</feature>
<feature type="strand" evidence="24">
    <location>
        <begin position="192"/>
        <end position="196"/>
    </location>
</feature>
<feature type="helix" evidence="24">
    <location>
        <begin position="206"/>
        <end position="216"/>
    </location>
</feature>
<feature type="strand" evidence="24">
    <location>
        <begin position="227"/>
        <end position="230"/>
    </location>
</feature>
<feature type="helix" evidence="24">
    <location>
        <begin position="236"/>
        <end position="242"/>
    </location>
</feature>
<feature type="strand" evidence="24">
    <location>
        <begin position="246"/>
        <end position="253"/>
    </location>
</feature>
<feature type="helix" evidence="25">
    <location>
        <begin position="255"/>
        <end position="258"/>
    </location>
</feature>
<feature type="helix" evidence="25">
    <location>
        <begin position="266"/>
        <end position="270"/>
    </location>
</feature>
<feature type="helix" evidence="24">
    <location>
        <begin position="275"/>
        <end position="285"/>
    </location>
</feature>
<feature type="strand" evidence="24">
    <location>
        <begin position="289"/>
        <end position="292"/>
    </location>
</feature>
<feature type="helix" evidence="24">
    <location>
        <begin position="295"/>
        <end position="302"/>
    </location>
</feature>
<feature type="helix" evidence="24">
    <location>
        <begin position="316"/>
        <end position="330"/>
    </location>
</feature>
<feature type="strand" evidence="24">
    <location>
        <begin position="333"/>
        <end position="335"/>
    </location>
</feature>
<feature type="strand" evidence="24">
    <location>
        <begin position="343"/>
        <end position="346"/>
    </location>
</feature>
<feature type="helix" evidence="24">
    <location>
        <begin position="347"/>
        <end position="358"/>
    </location>
</feature>
<feature type="turn" evidence="25">
    <location>
        <begin position="359"/>
        <end position="361"/>
    </location>
</feature>
<feature type="strand" evidence="24">
    <location>
        <begin position="366"/>
        <end position="368"/>
    </location>
</feature>
<feature type="helix" evidence="24">
    <location>
        <begin position="374"/>
        <end position="403"/>
    </location>
</feature>
<feature type="helix" evidence="25">
    <location>
        <begin position="594"/>
        <end position="597"/>
    </location>
</feature>
<feature type="turn" evidence="24">
    <location>
        <begin position="600"/>
        <end position="604"/>
    </location>
</feature>
<feature type="helix" evidence="24">
    <location>
        <begin position="605"/>
        <end position="612"/>
    </location>
</feature>
<feature type="helix" evidence="24">
    <location>
        <begin position="617"/>
        <end position="643"/>
    </location>
</feature>
<feature type="helix" evidence="24">
    <location>
        <begin position="682"/>
        <end position="689"/>
    </location>
</feature>
<feature type="helix" evidence="24">
    <location>
        <begin position="700"/>
        <end position="706"/>
    </location>
</feature>
<feature type="strand" evidence="25">
    <location>
        <begin position="708"/>
        <end position="710"/>
    </location>
</feature>
<feature type="helix" evidence="24">
    <location>
        <begin position="711"/>
        <end position="716"/>
    </location>
</feature>
<feature type="strand" evidence="25">
    <location>
        <begin position="727"/>
        <end position="729"/>
    </location>
</feature>
<feature type="strand" evidence="24">
    <location>
        <begin position="730"/>
        <end position="732"/>
    </location>
</feature>
<feature type="helix" evidence="24">
    <location>
        <begin position="744"/>
        <end position="753"/>
    </location>
</feature>
<feature type="helix" evidence="24">
    <location>
        <begin position="759"/>
        <end position="762"/>
    </location>
</feature>
<feature type="helix" evidence="25">
    <location>
        <begin position="763"/>
        <end position="765"/>
    </location>
</feature>
<feature type="strand" evidence="25">
    <location>
        <begin position="771"/>
        <end position="774"/>
    </location>
</feature>
<feature type="helix" evidence="24">
    <location>
        <begin position="781"/>
        <end position="789"/>
    </location>
</feature>
<feature type="strand" evidence="25">
    <location>
        <begin position="800"/>
        <end position="802"/>
    </location>
</feature>
<feature type="strand" evidence="24">
    <location>
        <begin position="804"/>
        <end position="808"/>
    </location>
</feature>
<feature type="strand" evidence="24">
    <location>
        <begin position="811"/>
        <end position="814"/>
    </location>
</feature>
<feature type="strand" evidence="24">
    <location>
        <begin position="846"/>
        <end position="849"/>
    </location>
</feature>
<feature type="helix" evidence="24">
    <location>
        <begin position="874"/>
        <end position="881"/>
    </location>
</feature>
<feature type="helix" evidence="24">
    <location>
        <begin position="885"/>
        <end position="888"/>
    </location>
</feature>
<feature type="strand" evidence="25">
    <location>
        <begin position="894"/>
        <end position="896"/>
    </location>
</feature>
<feature type="helix" evidence="24">
    <location>
        <begin position="897"/>
        <end position="899"/>
    </location>
</feature>
<feature type="helix" evidence="24">
    <location>
        <begin position="922"/>
        <end position="930"/>
    </location>
</feature>
<comment type="function">
    <text evidence="3 4 5 6 8 9 11 12 13 14 15 16 18 19 20 21">Possesses 5'-&gt;3' exoribonuclease activity. Required for the processing of nuclear mRNA, rRNA and small nucleolar RNA (snoRNA) precursors. May promote termination of transcription by RNA polymerase II via the recruitment of 3'-end processing factors to the poly(A) site and by the degradation of nascent RNA downstream of the poly(A) site.</text>
</comment>
<comment type="cofactor">
    <cofactor evidence="14 15">
        <name>Mg(2+)</name>
        <dbReference type="ChEBI" id="CHEBI:18420"/>
    </cofactor>
    <cofactor evidence="14 15">
        <name>Mn(2+)</name>
        <dbReference type="ChEBI" id="CHEBI:29035"/>
    </cofactor>
</comment>
<comment type="activity regulation">
    <text evidence="18">Inhibited by nucleoside 3', 5'-bisphosphates.</text>
</comment>
<comment type="biophysicochemical properties">
    <phDependence>
        <text evidence="14">Optimum pH is 8.0-8.8.</text>
    </phDependence>
</comment>
<comment type="subunit">
    <text evidence="3 7 11">Interacts with RAI1 and RTT103.</text>
</comment>
<comment type="interaction">
    <interactant intactId="EBI-14845">
        <id>Q02792</id>
    </interactant>
    <interactant intactId="EBI-24206">
        <id>P53063</id>
        <label>RAI1</label>
    </interactant>
    <organismsDiffer>false</organismsDiffer>
    <experiments>5</experiments>
</comment>
<comment type="subcellular location">
    <subcellularLocation>
        <location evidence="7 15 17">Nucleus</location>
    </subcellularLocation>
</comment>
<comment type="miscellaneous">
    <text evidence="10">Present with 623 molecules/cell in log phase SD medium.</text>
</comment>
<comment type="similarity">
    <text evidence="22">Belongs to the 5'-3' exonuclease family. XRN2/RAT1 subfamily.</text>
</comment>
<evidence type="ECO:0000255" key="1"/>
<evidence type="ECO:0000256" key="2">
    <source>
        <dbReference type="SAM" id="MobiDB-lite"/>
    </source>
</evidence>
<evidence type="ECO:0000269" key="3">
    <source>
    </source>
</evidence>
<evidence type="ECO:0000269" key="4">
    <source>
    </source>
</evidence>
<evidence type="ECO:0000269" key="5">
    <source>
    </source>
</evidence>
<evidence type="ECO:0000269" key="6">
    <source>
    </source>
</evidence>
<evidence type="ECO:0000269" key="7">
    <source>
    </source>
</evidence>
<evidence type="ECO:0000269" key="8">
    <source>
    </source>
</evidence>
<evidence type="ECO:0000269" key="9">
    <source>
    </source>
</evidence>
<evidence type="ECO:0000269" key="10">
    <source>
    </source>
</evidence>
<evidence type="ECO:0000269" key="11">
    <source>
    </source>
</evidence>
<evidence type="ECO:0000269" key="12">
    <source>
    </source>
</evidence>
<evidence type="ECO:0000269" key="13">
    <source>
    </source>
</evidence>
<evidence type="ECO:0000269" key="14">
    <source>
    </source>
</evidence>
<evidence type="ECO:0000269" key="15">
    <source>
    </source>
</evidence>
<evidence type="ECO:0000269" key="16">
    <source>
    </source>
</evidence>
<evidence type="ECO:0000269" key="17">
    <source>
    </source>
</evidence>
<evidence type="ECO:0000269" key="18">
    <source>
    </source>
</evidence>
<evidence type="ECO:0000269" key="19">
    <source>
    </source>
</evidence>
<evidence type="ECO:0000269" key="20">
    <source>
    </source>
</evidence>
<evidence type="ECO:0000269" key="21">
    <source>
    </source>
</evidence>
<evidence type="ECO:0000305" key="22"/>
<evidence type="ECO:0007744" key="23">
    <source>
    </source>
</evidence>
<evidence type="ECO:0007829" key="24">
    <source>
        <dbReference type="PDB" id="8JCH"/>
    </source>
</evidence>
<evidence type="ECO:0007829" key="25">
    <source>
        <dbReference type="PDB" id="8K5P"/>
    </source>
</evidence>
<proteinExistence type="evidence at protein level"/>
<accession>Q02792</accession>
<accession>D6W2B4</accession>
<protein>
    <recommendedName>
        <fullName>5'-3' exoribonuclease 2</fullName>
        <ecNumber>3.1.13.-</ecNumber>
    </recommendedName>
    <alternativeName>
        <fullName>Ribonucleic acid-trafficking protein 1</fullName>
    </alternativeName>
    <alternativeName>
        <fullName>p116</fullName>
    </alternativeName>
</protein>
<sequence length="1006" mass="115934">MGVPSFFRWLSRKYPKIISPVLEEQPQIVDGVILPLDYSASNPNGELDNLYLDMNGIVHPCSHPENKPPPETEDEMLLAVFEYTNRVLNMARPRKVLVMAVDGVAPRAKMNQQRARRFRSARDAQIENEAREEIMRQREEVGEIIDDAVRNKKTWDSNAITPGTPFMDKLAAALRYWTAFKLATDPGWKNLQVIISDATVPGEGEHKIMNFIRSQRADPEYNPNTTHCIYGLDADLIFLGLATHEPHFKILREDVFAQDNRKRNNLKDTINMTEEEKQFLQKQNSEQPFLWLHINVLREYLSAELWVPGLPFTFDLERAIDDWVFMCFFCGNDFLPHLPCLDVRENSIDILLDIWKVVLPKLKTYMTCDGVLNLPSVETLLQHLGSREGDIFKTRHIQEARKKEAFERRKAQKNMSKGQDRHPTVATEQLQMYDTQGNLAKGSWNLTTSDMVRLKKELMLANEGNEEAIAKVKQQSDKNNELMKDISKEEIDDAVSKANKTNFNLAEVMKQKIINKKHRLEKDNEEEEIAKDSKKVKTEKAESECDLDAEIKDEIVADVNDRENSETTEVSRDSPVHSTVNVSEGPKNGVFDTDEFVKLFEPGYHERYYTAKFHVTPQDIEQLRKDMVKCYIEGVAWVLMYYYQGCASWNWFYPYHYAPLATDFHGFSHLEIKFEEGTPFLPYEQLMSVLPAASGHALPKIFRSLMSEPDSEIIDFYPEEFPIDMNGKKMSWQGIALLPFIDQDRLLTAVRAQYPLLSDAERARNIRGEPVLLISNKNANYERFSKKLYSKENNNNNVVVKFQHFKSGLSGIVSKDVEGFELNGKIVCPIQGGSLPNLSTTLILKMSYRLIPLPSRNKSIILNGFIPSEPVLTAYDLDSIMYKYNNQNYSRRWNFGNDLKQNIVPVGPKGITQYKPRTGGYRAFFYFAELSRNNVQPAHNYGRNSYNSQPGFNNSRYDGGNNNYRQNSNYRNNNYSGNRNSGQYSGNSYSRNNKQSRYDNSRANRR</sequence>
<keyword id="KW-0002">3D-structure</keyword>
<keyword id="KW-0175">Coiled coil</keyword>
<keyword id="KW-0903">Direct protein sequencing</keyword>
<keyword id="KW-0269">Exonuclease</keyword>
<keyword id="KW-0378">Hydrolase</keyword>
<keyword id="KW-0507">mRNA processing</keyword>
<keyword id="KW-0540">Nuclease</keyword>
<keyword id="KW-0539">Nucleus</keyword>
<keyword id="KW-0597">Phosphoprotein</keyword>
<keyword id="KW-1185">Reference proteome</keyword>
<keyword id="KW-0677">Repeat</keyword>
<keyword id="KW-0698">rRNA processing</keyword>
<keyword id="KW-0804">Transcription</keyword>
<keyword id="KW-0805">Transcription regulation</keyword>
<keyword id="KW-0806">Transcription termination</keyword>
<dbReference type="EC" id="3.1.13.-"/>
<dbReference type="EMBL" id="M95626">
    <property type="protein sequence ID" value="AAA34960.1"/>
    <property type="molecule type" value="Genomic_DNA"/>
</dbReference>
<dbReference type="EMBL" id="Z11746">
    <property type="status" value="NOT_ANNOTATED_CDS"/>
    <property type="molecule type" value="Genomic_DNA"/>
</dbReference>
<dbReference type="EMBL" id="S61567">
    <property type="protein sequence ID" value="AAB26818.1"/>
    <property type="molecule type" value="Genomic_DNA"/>
</dbReference>
<dbReference type="EMBL" id="Z74956">
    <property type="protein sequence ID" value="CAA99240.1"/>
    <property type="molecule type" value="Genomic_DNA"/>
</dbReference>
<dbReference type="EMBL" id="L06011">
    <property type="protein sequence ID" value="AAA16950.1"/>
    <property type="molecule type" value="Unassigned_DNA"/>
</dbReference>
<dbReference type="EMBL" id="BK006948">
    <property type="protein sequence ID" value="DAA10830.1"/>
    <property type="molecule type" value="Genomic_DNA"/>
</dbReference>
<dbReference type="PIR" id="S20126">
    <property type="entry name" value="S20126"/>
</dbReference>
<dbReference type="RefSeq" id="NP_014691.1">
    <property type="nucleotide sequence ID" value="NM_001183467.1"/>
</dbReference>
<dbReference type="PDB" id="8JCH">
    <property type="method" value="EM"/>
    <property type="resolution" value="2.70 A"/>
    <property type="chains" value="M=1-1006"/>
</dbReference>
<dbReference type="PDB" id="8K5P">
    <property type="method" value="EM"/>
    <property type="resolution" value="2.80 A"/>
    <property type="chains" value="M=1-1006"/>
</dbReference>
<dbReference type="PDB" id="8Q6V">
    <property type="method" value="EM"/>
    <property type="resolution" value="3.23 A"/>
    <property type="chains" value="B=1-1006"/>
</dbReference>
<dbReference type="PDB" id="9FMS">
    <property type="method" value="EM"/>
    <property type="resolution" value="2.65 A"/>
    <property type="chains" value="B=1-1006"/>
</dbReference>
<dbReference type="PDBsum" id="8JCH"/>
<dbReference type="PDBsum" id="8K5P"/>
<dbReference type="PDBsum" id="8Q6V"/>
<dbReference type="PDBsum" id="9FMS"/>
<dbReference type="EMDB" id="EMD-18199"/>
<dbReference type="EMDB" id="EMD-36162"/>
<dbReference type="EMDB" id="EMD-36908"/>
<dbReference type="EMDB" id="EMD-50566"/>
<dbReference type="SMR" id="Q02792"/>
<dbReference type="BioGRID" id="34449">
    <property type="interactions" value="633"/>
</dbReference>
<dbReference type="ComplexPortal" id="CPX-1332">
    <property type="entry name" value="RAT1-RAI1 RNA polymerase II termination complex"/>
</dbReference>
<dbReference type="DIP" id="DIP-6692N"/>
<dbReference type="FunCoup" id="Q02792">
    <property type="interactions" value="1278"/>
</dbReference>
<dbReference type="IntAct" id="Q02792">
    <property type="interactions" value="7"/>
</dbReference>
<dbReference type="MINT" id="Q02792"/>
<dbReference type="STRING" id="4932.YOR048C"/>
<dbReference type="GlyGen" id="Q02792">
    <property type="glycosylation" value="1 site"/>
</dbReference>
<dbReference type="iPTMnet" id="Q02792"/>
<dbReference type="PaxDb" id="4932-YOR048C"/>
<dbReference type="PeptideAtlas" id="Q02792"/>
<dbReference type="EnsemblFungi" id="YOR048C_mRNA">
    <property type="protein sequence ID" value="YOR048C"/>
    <property type="gene ID" value="YOR048C"/>
</dbReference>
<dbReference type="GeneID" id="854213"/>
<dbReference type="KEGG" id="sce:YOR048C"/>
<dbReference type="AGR" id="SGD:S000005574"/>
<dbReference type="SGD" id="S000005574">
    <property type="gene designation" value="RAT1"/>
</dbReference>
<dbReference type="VEuPathDB" id="FungiDB:YOR048C"/>
<dbReference type="eggNOG" id="KOG2044">
    <property type="taxonomic scope" value="Eukaryota"/>
</dbReference>
<dbReference type="GeneTree" id="ENSGT00670000098098"/>
<dbReference type="HOGENOM" id="CLU_006038_1_1_1"/>
<dbReference type="InParanoid" id="Q02792"/>
<dbReference type="OMA" id="ITHDMVV"/>
<dbReference type="OrthoDB" id="28245at2759"/>
<dbReference type="BioCyc" id="YEAST:G3O-33592-MONOMER"/>
<dbReference type="BRENDA" id="3.1.13.B1">
    <property type="organism ID" value="984"/>
</dbReference>
<dbReference type="Reactome" id="R-SCE-450385">
    <property type="pathway name" value="Butyrate Response Factor 1 (BRF1) binds and destabilizes mRNA"/>
</dbReference>
<dbReference type="Reactome" id="R-SCE-450513">
    <property type="pathway name" value="Tristetraprolin (TTP, ZFP36) binds and destabilizes mRNA"/>
</dbReference>
<dbReference type="BioGRID-ORCS" id="854213">
    <property type="hits" value="8 hits in 10 CRISPR screens"/>
</dbReference>
<dbReference type="PRO" id="PR:Q02792"/>
<dbReference type="Proteomes" id="UP000002311">
    <property type="component" value="Chromosome XV"/>
</dbReference>
<dbReference type="RNAct" id="Q02792">
    <property type="molecule type" value="protein"/>
</dbReference>
<dbReference type="GO" id="GO:0090730">
    <property type="term" value="C:Las1 complex"/>
    <property type="evidence" value="ECO:0000353"/>
    <property type="project" value="ComplexPortal"/>
</dbReference>
<dbReference type="GO" id="GO:0005739">
    <property type="term" value="C:mitochondrion"/>
    <property type="evidence" value="ECO:0007005"/>
    <property type="project" value="SGD"/>
</dbReference>
<dbReference type="GO" id="GO:0005634">
    <property type="term" value="C:nucleus"/>
    <property type="evidence" value="ECO:0000314"/>
    <property type="project" value="SGD"/>
</dbReference>
<dbReference type="GO" id="GO:0110103">
    <property type="term" value="C:RNA polymerase II termination complex"/>
    <property type="evidence" value="ECO:0000353"/>
    <property type="project" value="ComplexPortal"/>
</dbReference>
<dbReference type="GO" id="GO:0004534">
    <property type="term" value="F:5'-3' RNA exonuclease activity"/>
    <property type="evidence" value="ECO:0000314"/>
    <property type="project" value="SGD"/>
</dbReference>
<dbReference type="GO" id="GO:0003729">
    <property type="term" value="F:mRNA binding"/>
    <property type="evidence" value="ECO:0007005"/>
    <property type="project" value="SGD"/>
</dbReference>
<dbReference type="GO" id="GO:0003723">
    <property type="term" value="F:RNA binding"/>
    <property type="evidence" value="ECO:0000318"/>
    <property type="project" value="GO_Central"/>
</dbReference>
<dbReference type="GO" id="GO:0019843">
    <property type="term" value="F:rRNA binding"/>
    <property type="evidence" value="ECO:0000314"/>
    <property type="project" value="GO_Central"/>
</dbReference>
<dbReference type="GO" id="GO:0000448">
    <property type="term" value="P:cleavage in ITS2 between 5.8S rRNA and LSU-rRNA of tricistronic rRNA transcript (SSU-rRNA, 5.8S rRNA, LSU-rRNA)"/>
    <property type="evidence" value="ECO:0000314"/>
    <property type="project" value="SGD"/>
</dbReference>
<dbReference type="GO" id="GO:0000398">
    <property type="term" value="P:mRNA splicing, via spliceosome"/>
    <property type="evidence" value="ECO:0000315"/>
    <property type="project" value="SGD"/>
</dbReference>
<dbReference type="GO" id="GO:0110155">
    <property type="term" value="P:NAD-cap decapping"/>
    <property type="evidence" value="ECO:0000314"/>
    <property type="project" value="SGD"/>
</dbReference>
<dbReference type="GO" id="GO:0034244">
    <property type="term" value="P:negative regulation of transcription elongation by RNA polymerase II"/>
    <property type="evidence" value="ECO:0000315"/>
    <property type="project" value="SGD"/>
</dbReference>
<dbReference type="GO" id="GO:0071028">
    <property type="term" value="P:nuclear mRNA surveillance"/>
    <property type="evidence" value="ECO:0000315"/>
    <property type="project" value="SGD"/>
</dbReference>
<dbReference type="GO" id="GO:0071035">
    <property type="term" value="P:nuclear polyadenylation-dependent rRNA catabolic process"/>
    <property type="evidence" value="ECO:0000315"/>
    <property type="project" value="SGD"/>
</dbReference>
<dbReference type="GO" id="GO:0000956">
    <property type="term" value="P:nuclear-transcribed mRNA catabolic process"/>
    <property type="evidence" value="ECO:0000318"/>
    <property type="project" value="GO_Central"/>
</dbReference>
<dbReference type="GO" id="GO:1904595">
    <property type="term" value="P:positive regulation of termination of RNA polymerase II transcription"/>
    <property type="evidence" value="ECO:0000314"/>
    <property type="project" value="ComplexPortal"/>
</dbReference>
<dbReference type="GO" id="GO:0006364">
    <property type="term" value="P:rRNA processing"/>
    <property type="evidence" value="ECO:0000315"/>
    <property type="project" value="SGD"/>
</dbReference>
<dbReference type="GO" id="GO:0043144">
    <property type="term" value="P:sno(s)RNA processing"/>
    <property type="evidence" value="ECO:0000315"/>
    <property type="project" value="SGD"/>
</dbReference>
<dbReference type="GO" id="GO:0030847">
    <property type="term" value="P:termination of RNA polymerase II transcription, exosome-dependent"/>
    <property type="evidence" value="ECO:0000315"/>
    <property type="project" value="SGD"/>
</dbReference>
<dbReference type="GO" id="GO:0030846">
    <property type="term" value="P:termination of RNA polymerase II transcription, poly(A)-coupled"/>
    <property type="evidence" value="ECO:0000315"/>
    <property type="project" value="SGD"/>
</dbReference>
<dbReference type="CDD" id="cd18673">
    <property type="entry name" value="PIN_XRN1-2-like"/>
    <property type="match status" value="1"/>
</dbReference>
<dbReference type="FunFam" id="1.25.40.1050:FF:000003">
    <property type="entry name" value="5'-3' exoribonuclease"/>
    <property type="match status" value="1"/>
</dbReference>
<dbReference type="FunFam" id="3.40.50.12390:FF:000003">
    <property type="entry name" value="5'-3' exoribonuclease"/>
    <property type="match status" value="1"/>
</dbReference>
<dbReference type="FunFam" id="3.40.50.12390:FF:000005">
    <property type="entry name" value="5'-3' exoribonuclease 2"/>
    <property type="match status" value="1"/>
</dbReference>
<dbReference type="Gene3D" id="1.25.40.1050">
    <property type="match status" value="1"/>
</dbReference>
<dbReference type="Gene3D" id="3.40.50.12390">
    <property type="match status" value="1"/>
</dbReference>
<dbReference type="InterPro" id="IPR027073">
    <property type="entry name" value="5_3_exoribonuclease"/>
</dbReference>
<dbReference type="InterPro" id="IPR041412">
    <property type="entry name" value="Xrn1_helical"/>
</dbReference>
<dbReference type="InterPro" id="IPR004859">
    <property type="entry name" value="Xrn1_N"/>
</dbReference>
<dbReference type="InterPro" id="IPR017151">
    <property type="entry name" value="Xrn2/3/4"/>
</dbReference>
<dbReference type="PANTHER" id="PTHR12341:SF41">
    <property type="entry name" value="5'-3' EXORIBONUCLEASE 2"/>
    <property type="match status" value="1"/>
</dbReference>
<dbReference type="PANTHER" id="PTHR12341">
    <property type="entry name" value="5'-&gt;3' EXORIBONUCLEASE"/>
    <property type="match status" value="1"/>
</dbReference>
<dbReference type="Pfam" id="PF17846">
    <property type="entry name" value="XRN_M"/>
    <property type="match status" value="2"/>
</dbReference>
<dbReference type="Pfam" id="PF03159">
    <property type="entry name" value="XRN_N"/>
    <property type="match status" value="1"/>
</dbReference>
<dbReference type="PIRSF" id="PIRSF037239">
    <property type="entry name" value="Exonuclease_Xrn2"/>
    <property type="match status" value="1"/>
</dbReference>
<name>XRN2_YEAST</name>
<organism>
    <name type="scientific">Saccharomyces cerevisiae (strain ATCC 204508 / S288c)</name>
    <name type="common">Baker's yeast</name>
    <dbReference type="NCBI Taxonomy" id="559292"/>
    <lineage>
        <taxon>Eukaryota</taxon>
        <taxon>Fungi</taxon>
        <taxon>Dikarya</taxon>
        <taxon>Ascomycota</taxon>
        <taxon>Saccharomycotina</taxon>
        <taxon>Saccharomycetes</taxon>
        <taxon>Saccharomycetales</taxon>
        <taxon>Saccharomycetaceae</taxon>
        <taxon>Saccharomyces</taxon>
    </lineage>
</organism>
<gene>
    <name type="primary">RAT1</name>
    <name type="synonym">HKE1</name>
    <name type="synonym">TAP1</name>
    <name type="ordered locus">YOR048C</name>
</gene>